<comment type="function">
    <text evidence="1">Catalyzes the NAD(+)-dependent oxidation of L-threonine to 2-amino-3-ketobutyrate.</text>
</comment>
<comment type="catalytic activity">
    <reaction evidence="1">
        <text>L-threonine + NAD(+) = (2S)-2-amino-3-oxobutanoate + NADH + H(+)</text>
        <dbReference type="Rhea" id="RHEA:13161"/>
        <dbReference type="ChEBI" id="CHEBI:15378"/>
        <dbReference type="ChEBI" id="CHEBI:57540"/>
        <dbReference type="ChEBI" id="CHEBI:57926"/>
        <dbReference type="ChEBI" id="CHEBI:57945"/>
        <dbReference type="ChEBI" id="CHEBI:78948"/>
        <dbReference type="EC" id="1.1.1.103"/>
    </reaction>
</comment>
<comment type="cofactor">
    <cofactor evidence="1">
        <name>Zn(2+)</name>
        <dbReference type="ChEBI" id="CHEBI:29105"/>
    </cofactor>
    <text evidence="1">Binds 2 Zn(2+) ions per subunit.</text>
</comment>
<comment type="pathway">
    <text evidence="1">Amino-acid degradation; L-threonine degradation via oxydo-reductase pathway; glycine from L-threonine: step 1/2.</text>
</comment>
<comment type="subunit">
    <text evidence="1">Homotetramer.</text>
</comment>
<comment type="subcellular location">
    <subcellularLocation>
        <location evidence="1">Cytoplasm</location>
    </subcellularLocation>
</comment>
<comment type="similarity">
    <text evidence="1">Belongs to the zinc-containing alcohol dehydrogenase family.</text>
</comment>
<dbReference type="EC" id="1.1.1.103" evidence="1"/>
<dbReference type="EMBL" id="CP001234">
    <property type="protein sequence ID" value="ACP07805.1"/>
    <property type="molecule type" value="Genomic_DNA"/>
</dbReference>
<dbReference type="RefSeq" id="WP_000692622.1">
    <property type="nucleotide sequence ID" value="NC_012580.1"/>
</dbReference>
<dbReference type="SMR" id="C3LWF0"/>
<dbReference type="GeneID" id="69721606"/>
<dbReference type="KEGG" id="vcm:VCM66_A0845"/>
<dbReference type="HOGENOM" id="CLU_026673_11_0_6"/>
<dbReference type="UniPathway" id="UPA00046">
    <property type="reaction ID" value="UER00505"/>
</dbReference>
<dbReference type="Proteomes" id="UP000001217">
    <property type="component" value="Chromosome II"/>
</dbReference>
<dbReference type="GO" id="GO:0005737">
    <property type="term" value="C:cytoplasm"/>
    <property type="evidence" value="ECO:0007669"/>
    <property type="project" value="UniProtKB-SubCell"/>
</dbReference>
<dbReference type="GO" id="GO:0008743">
    <property type="term" value="F:L-threonine 3-dehydrogenase activity"/>
    <property type="evidence" value="ECO:0007669"/>
    <property type="project" value="UniProtKB-UniRule"/>
</dbReference>
<dbReference type="GO" id="GO:0008270">
    <property type="term" value="F:zinc ion binding"/>
    <property type="evidence" value="ECO:0007669"/>
    <property type="project" value="UniProtKB-UniRule"/>
</dbReference>
<dbReference type="GO" id="GO:0019518">
    <property type="term" value="P:L-threonine catabolic process to glycine"/>
    <property type="evidence" value="ECO:0007669"/>
    <property type="project" value="UniProtKB-UniPathway"/>
</dbReference>
<dbReference type="FunFam" id="3.40.50.720:FF:000059">
    <property type="entry name" value="L-threonine 3-dehydrogenase"/>
    <property type="match status" value="1"/>
</dbReference>
<dbReference type="Gene3D" id="3.90.180.10">
    <property type="entry name" value="Medium-chain alcohol dehydrogenases, catalytic domain"/>
    <property type="match status" value="1"/>
</dbReference>
<dbReference type="Gene3D" id="3.40.50.720">
    <property type="entry name" value="NAD(P)-binding Rossmann-like Domain"/>
    <property type="match status" value="1"/>
</dbReference>
<dbReference type="HAMAP" id="MF_00627">
    <property type="entry name" value="Thr_dehydrog"/>
    <property type="match status" value="1"/>
</dbReference>
<dbReference type="InterPro" id="IPR013149">
    <property type="entry name" value="ADH-like_C"/>
</dbReference>
<dbReference type="InterPro" id="IPR013154">
    <property type="entry name" value="ADH-like_N"/>
</dbReference>
<dbReference type="InterPro" id="IPR002328">
    <property type="entry name" value="ADH_Zn_CS"/>
</dbReference>
<dbReference type="InterPro" id="IPR011032">
    <property type="entry name" value="GroES-like_sf"/>
</dbReference>
<dbReference type="InterPro" id="IPR004627">
    <property type="entry name" value="L-Threonine_3-DHase"/>
</dbReference>
<dbReference type="InterPro" id="IPR036291">
    <property type="entry name" value="NAD(P)-bd_dom_sf"/>
</dbReference>
<dbReference type="InterPro" id="IPR020843">
    <property type="entry name" value="PKS_ER"/>
</dbReference>
<dbReference type="InterPro" id="IPR050129">
    <property type="entry name" value="Zn_alcohol_dh"/>
</dbReference>
<dbReference type="NCBIfam" id="NF003808">
    <property type="entry name" value="PRK05396.1"/>
    <property type="match status" value="1"/>
</dbReference>
<dbReference type="NCBIfam" id="TIGR00692">
    <property type="entry name" value="tdh"/>
    <property type="match status" value="1"/>
</dbReference>
<dbReference type="PANTHER" id="PTHR43401">
    <property type="entry name" value="L-THREONINE 3-DEHYDROGENASE"/>
    <property type="match status" value="1"/>
</dbReference>
<dbReference type="PANTHER" id="PTHR43401:SF2">
    <property type="entry name" value="L-THREONINE 3-DEHYDROGENASE"/>
    <property type="match status" value="1"/>
</dbReference>
<dbReference type="Pfam" id="PF08240">
    <property type="entry name" value="ADH_N"/>
    <property type="match status" value="1"/>
</dbReference>
<dbReference type="Pfam" id="PF00107">
    <property type="entry name" value="ADH_zinc_N"/>
    <property type="match status" value="1"/>
</dbReference>
<dbReference type="SMART" id="SM00829">
    <property type="entry name" value="PKS_ER"/>
    <property type="match status" value="1"/>
</dbReference>
<dbReference type="SUPFAM" id="SSF50129">
    <property type="entry name" value="GroES-like"/>
    <property type="match status" value="1"/>
</dbReference>
<dbReference type="SUPFAM" id="SSF51735">
    <property type="entry name" value="NAD(P)-binding Rossmann-fold domains"/>
    <property type="match status" value="1"/>
</dbReference>
<dbReference type="PROSITE" id="PS00059">
    <property type="entry name" value="ADH_ZINC"/>
    <property type="match status" value="1"/>
</dbReference>
<accession>C3LWF0</accession>
<proteinExistence type="inferred from homology"/>
<evidence type="ECO:0000255" key="1">
    <source>
        <dbReference type="HAMAP-Rule" id="MF_00627"/>
    </source>
</evidence>
<organism>
    <name type="scientific">Vibrio cholerae serotype O1 (strain M66-2)</name>
    <dbReference type="NCBI Taxonomy" id="579112"/>
    <lineage>
        <taxon>Bacteria</taxon>
        <taxon>Pseudomonadati</taxon>
        <taxon>Pseudomonadota</taxon>
        <taxon>Gammaproteobacteria</taxon>
        <taxon>Vibrionales</taxon>
        <taxon>Vibrionaceae</taxon>
        <taxon>Vibrio</taxon>
    </lineage>
</organism>
<protein>
    <recommendedName>
        <fullName evidence="1">L-threonine 3-dehydrogenase</fullName>
        <shortName evidence="1">TDH</shortName>
        <ecNumber evidence="1">1.1.1.103</ecNumber>
    </recommendedName>
</protein>
<keyword id="KW-0963">Cytoplasm</keyword>
<keyword id="KW-0479">Metal-binding</keyword>
<keyword id="KW-0520">NAD</keyword>
<keyword id="KW-0560">Oxidoreductase</keyword>
<keyword id="KW-0862">Zinc</keyword>
<sequence>MKIKALSKLKPEQGIWMNEVDMPELGHNDLLIKIKKTAICGTDVHIYNWDEWSQKTIPVPMVVGHEYVGEVVGIGQEVRGFQIGDRVSGEGHITCGHCRNCRGGRTHLCRNTIGVGVNRTGCFSEYLVIPAFNAFKIPDGISDDLASIFDPFGNAVHTALSFDLVGEDVLITGAGPIGIMAAAVAKHVGARHVVITDVNEYRLDLARKMGVTRAVNVAEQNLEDVMKELGMTEGFDVGLEMSGVPSAFSAMLKTMNHGGRIALLGIPPSSMAIDWNQVIFKGLVIKGIYGREMFETWYKMASLIQSGLDISPIITHHFKVDDFQKGFDIMRSGASGKVILDWQ</sequence>
<name>TDH_VIBCM</name>
<gene>
    <name evidence="1" type="primary">tdh</name>
    <name type="ordered locus">VCM66_A0845</name>
</gene>
<reference key="1">
    <citation type="journal article" date="2008" name="PLoS ONE">
        <title>A recalibrated molecular clock and independent origins for the cholera pandemic clones.</title>
        <authorList>
            <person name="Feng L."/>
            <person name="Reeves P.R."/>
            <person name="Lan R."/>
            <person name="Ren Y."/>
            <person name="Gao C."/>
            <person name="Zhou Z."/>
            <person name="Ren Y."/>
            <person name="Cheng J."/>
            <person name="Wang W."/>
            <person name="Wang J."/>
            <person name="Qian W."/>
            <person name="Li D."/>
            <person name="Wang L."/>
        </authorList>
    </citation>
    <scope>NUCLEOTIDE SEQUENCE [LARGE SCALE GENOMIC DNA]</scope>
    <source>
        <strain>M66-2</strain>
    </source>
</reference>
<feature type="chain" id="PRO_1000147265" description="L-threonine 3-dehydrogenase">
    <location>
        <begin position="1"/>
        <end position="343"/>
    </location>
</feature>
<feature type="active site" description="Charge relay system" evidence="1">
    <location>
        <position position="42"/>
    </location>
</feature>
<feature type="active site" description="Charge relay system" evidence="1">
    <location>
        <position position="45"/>
    </location>
</feature>
<feature type="binding site" evidence="1">
    <location>
        <position position="40"/>
    </location>
    <ligand>
        <name>Zn(2+)</name>
        <dbReference type="ChEBI" id="CHEBI:29105"/>
        <label>1</label>
        <note>catalytic</note>
    </ligand>
</feature>
<feature type="binding site" evidence="1">
    <location>
        <position position="65"/>
    </location>
    <ligand>
        <name>Zn(2+)</name>
        <dbReference type="ChEBI" id="CHEBI:29105"/>
        <label>1</label>
        <note>catalytic</note>
    </ligand>
</feature>
<feature type="binding site" evidence="1">
    <location>
        <position position="66"/>
    </location>
    <ligand>
        <name>Zn(2+)</name>
        <dbReference type="ChEBI" id="CHEBI:29105"/>
        <label>1</label>
        <note>catalytic</note>
    </ligand>
</feature>
<feature type="binding site" evidence="1">
    <location>
        <position position="95"/>
    </location>
    <ligand>
        <name>Zn(2+)</name>
        <dbReference type="ChEBI" id="CHEBI:29105"/>
        <label>2</label>
    </ligand>
</feature>
<feature type="binding site" evidence="1">
    <location>
        <position position="98"/>
    </location>
    <ligand>
        <name>Zn(2+)</name>
        <dbReference type="ChEBI" id="CHEBI:29105"/>
        <label>2</label>
    </ligand>
</feature>
<feature type="binding site" evidence="1">
    <location>
        <position position="101"/>
    </location>
    <ligand>
        <name>Zn(2+)</name>
        <dbReference type="ChEBI" id="CHEBI:29105"/>
        <label>2</label>
    </ligand>
</feature>
<feature type="binding site" evidence="1">
    <location>
        <position position="109"/>
    </location>
    <ligand>
        <name>Zn(2+)</name>
        <dbReference type="ChEBI" id="CHEBI:29105"/>
        <label>2</label>
    </ligand>
</feature>
<feature type="binding site" evidence="1">
    <location>
        <position position="177"/>
    </location>
    <ligand>
        <name>NAD(+)</name>
        <dbReference type="ChEBI" id="CHEBI:57540"/>
    </ligand>
</feature>
<feature type="binding site" evidence="1">
    <location>
        <position position="197"/>
    </location>
    <ligand>
        <name>NAD(+)</name>
        <dbReference type="ChEBI" id="CHEBI:57540"/>
    </ligand>
</feature>
<feature type="binding site" evidence="1">
    <location>
        <position position="202"/>
    </location>
    <ligand>
        <name>NAD(+)</name>
        <dbReference type="ChEBI" id="CHEBI:57540"/>
    </ligand>
</feature>
<feature type="binding site" evidence="1">
    <location>
        <begin position="264"/>
        <end position="266"/>
    </location>
    <ligand>
        <name>NAD(+)</name>
        <dbReference type="ChEBI" id="CHEBI:57540"/>
    </ligand>
</feature>
<feature type="binding site" evidence="1">
    <location>
        <begin position="288"/>
        <end position="289"/>
    </location>
    <ligand>
        <name>NAD(+)</name>
        <dbReference type="ChEBI" id="CHEBI:57540"/>
    </ligand>
</feature>
<feature type="site" description="Important for catalytic activity for the proton relay mechanism but does not participate directly in the coordination of zinc atom" evidence="1">
    <location>
        <position position="150"/>
    </location>
</feature>